<name>LPXD_BURM1</name>
<feature type="chain" id="PRO_1000127666" description="UDP-3-O-acylglucosamine N-acyltransferase">
    <location>
        <begin position="1"/>
        <end position="360"/>
    </location>
</feature>
<feature type="active site" description="Proton acceptor" evidence="1">
    <location>
        <position position="253"/>
    </location>
</feature>
<sequence length="360" mass="36809">MALTLEELVKRFGGEIAGDAQCKVAGLAPLDQAGPGQLAFLANPKYLSQVETTGAGAVLIAPKDLEKLGAAASGRNFIVTPNPYAYFARVAQMFIDLAAPPRAAGVHPSATIDPAARVADSAVIGPHVTIEAGAVIEDGVQLDANVFVGRGTTIGAGSHLYPNVAVYHGCKIGPRAIVHAGAVIGSDGFGFAPDFVGDGEARTGTWVKIPQVGGVSIGPDVEIGANTTIDRGAMADTVIEECVKIDNQVQIGHNCRIGAYTVIAGCAGIAGSTTIGRHCMIGGAVGIAGHVTLGDYVIVTAKSGVSKSLPKAGIYTSAFPAVDHGEWNRSAALVRNLDKLRDRIKALETALAAQRGDTDA</sequence>
<reference key="1">
    <citation type="submission" date="2007-10" db="EMBL/GenBank/DDBJ databases">
        <title>Complete sequence of chromosome 1 of Burkholderia multivorans ATCC 17616.</title>
        <authorList>
            <person name="Copeland A."/>
            <person name="Lucas S."/>
            <person name="Lapidus A."/>
            <person name="Barry K."/>
            <person name="Glavina del Rio T."/>
            <person name="Dalin E."/>
            <person name="Tice H."/>
            <person name="Pitluck S."/>
            <person name="Chain P."/>
            <person name="Malfatti S."/>
            <person name="Shin M."/>
            <person name="Vergez L."/>
            <person name="Schmutz J."/>
            <person name="Larimer F."/>
            <person name="Land M."/>
            <person name="Hauser L."/>
            <person name="Kyrpides N."/>
            <person name="Kim E."/>
            <person name="Tiedje J."/>
            <person name="Richardson P."/>
        </authorList>
    </citation>
    <scope>NUCLEOTIDE SEQUENCE [LARGE SCALE GENOMIC DNA]</scope>
    <source>
        <strain>ATCC 17616 / 249</strain>
    </source>
</reference>
<reference key="2">
    <citation type="submission" date="2007-04" db="EMBL/GenBank/DDBJ databases">
        <title>Complete genome sequence of Burkholderia multivorans ATCC 17616.</title>
        <authorList>
            <person name="Ohtsubo Y."/>
            <person name="Yamashita A."/>
            <person name="Kurokawa K."/>
            <person name="Takami H."/>
            <person name="Yuhara S."/>
            <person name="Nishiyama E."/>
            <person name="Endo R."/>
            <person name="Miyazaki R."/>
            <person name="Ono A."/>
            <person name="Yano K."/>
            <person name="Ito M."/>
            <person name="Sota M."/>
            <person name="Yuji N."/>
            <person name="Hattori M."/>
            <person name="Tsuda M."/>
        </authorList>
    </citation>
    <scope>NUCLEOTIDE SEQUENCE [LARGE SCALE GENOMIC DNA]</scope>
    <source>
        <strain>ATCC 17616 / 249</strain>
    </source>
</reference>
<protein>
    <recommendedName>
        <fullName evidence="1">UDP-3-O-acylglucosamine N-acyltransferase</fullName>
        <ecNumber evidence="1">2.3.1.191</ecNumber>
    </recommendedName>
</protein>
<comment type="function">
    <text evidence="1">Catalyzes the N-acylation of UDP-3-O-acylglucosamine using 3-hydroxyacyl-ACP as the acyl donor. Is involved in the biosynthesis of lipid A, a phosphorylated glycolipid that anchors the lipopolysaccharide to the outer membrane of the cell.</text>
</comment>
<comment type="catalytic activity">
    <reaction evidence="1">
        <text>a UDP-3-O-[(3R)-3-hydroxyacyl]-alpha-D-glucosamine + a (3R)-hydroxyacyl-[ACP] = a UDP-2-N,3-O-bis[(3R)-3-hydroxyacyl]-alpha-D-glucosamine + holo-[ACP] + H(+)</text>
        <dbReference type="Rhea" id="RHEA:53836"/>
        <dbReference type="Rhea" id="RHEA-COMP:9685"/>
        <dbReference type="Rhea" id="RHEA-COMP:9945"/>
        <dbReference type="ChEBI" id="CHEBI:15378"/>
        <dbReference type="ChEBI" id="CHEBI:64479"/>
        <dbReference type="ChEBI" id="CHEBI:78827"/>
        <dbReference type="ChEBI" id="CHEBI:137740"/>
        <dbReference type="ChEBI" id="CHEBI:137748"/>
        <dbReference type="EC" id="2.3.1.191"/>
    </reaction>
</comment>
<comment type="pathway">
    <text evidence="1">Bacterial outer membrane biogenesis; LPS lipid A biosynthesis.</text>
</comment>
<comment type="subunit">
    <text evidence="1">Homotrimer.</text>
</comment>
<comment type="similarity">
    <text evidence="1">Belongs to the transferase hexapeptide repeat family. LpxD subfamily.</text>
</comment>
<gene>
    <name evidence="1" type="primary">lpxD</name>
    <name type="ordered locus">Bmul_1267</name>
    <name type="ordered locus">BMULJ_01980</name>
</gene>
<evidence type="ECO:0000255" key="1">
    <source>
        <dbReference type="HAMAP-Rule" id="MF_00523"/>
    </source>
</evidence>
<proteinExistence type="inferred from homology"/>
<accession>A9AIM4</accession>
<dbReference type="EC" id="2.3.1.191" evidence="1"/>
<dbReference type="EMBL" id="CP000868">
    <property type="protein sequence ID" value="ABX14955.1"/>
    <property type="molecule type" value="Genomic_DNA"/>
</dbReference>
<dbReference type="EMBL" id="AP009385">
    <property type="protein sequence ID" value="BAG43897.1"/>
    <property type="molecule type" value="Genomic_DNA"/>
</dbReference>
<dbReference type="RefSeq" id="WP_006413364.1">
    <property type="nucleotide sequence ID" value="NC_010084.1"/>
</dbReference>
<dbReference type="SMR" id="A9AIM4"/>
<dbReference type="STRING" id="395019.BMULJ_01980"/>
<dbReference type="GeneID" id="89570457"/>
<dbReference type="KEGG" id="bmj:BMULJ_01980"/>
<dbReference type="KEGG" id="bmu:Bmul_1267"/>
<dbReference type="eggNOG" id="COG1044">
    <property type="taxonomic scope" value="Bacteria"/>
</dbReference>
<dbReference type="HOGENOM" id="CLU_049865_0_1_4"/>
<dbReference type="UniPathway" id="UPA00973"/>
<dbReference type="Proteomes" id="UP000008815">
    <property type="component" value="Chromosome 1"/>
</dbReference>
<dbReference type="GO" id="GO:0016020">
    <property type="term" value="C:membrane"/>
    <property type="evidence" value="ECO:0007669"/>
    <property type="project" value="GOC"/>
</dbReference>
<dbReference type="GO" id="GO:0016410">
    <property type="term" value="F:N-acyltransferase activity"/>
    <property type="evidence" value="ECO:0007669"/>
    <property type="project" value="InterPro"/>
</dbReference>
<dbReference type="GO" id="GO:0009245">
    <property type="term" value="P:lipid A biosynthetic process"/>
    <property type="evidence" value="ECO:0007669"/>
    <property type="project" value="UniProtKB-UniRule"/>
</dbReference>
<dbReference type="CDD" id="cd03352">
    <property type="entry name" value="LbH_LpxD"/>
    <property type="match status" value="1"/>
</dbReference>
<dbReference type="Gene3D" id="1.20.5.170">
    <property type="match status" value="1"/>
</dbReference>
<dbReference type="Gene3D" id="2.160.10.10">
    <property type="entry name" value="Hexapeptide repeat proteins"/>
    <property type="match status" value="1"/>
</dbReference>
<dbReference type="Gene3D" id="3.40.1390.10">
    <property type="entry name" value="MurE/MurF, N-terminal domain"/>
    <property type="match status" value="1"/>
</dbReference>
<dbReference type="HAMAP" id="MF_00523">
    <property type="entry name" value="LpxD"/>
    <property type="match status" value="1"/>
</dbReference>
<dbReference type="InterPro" id="IPR001451">
    <property type="entry name" value="Hexapep"/>
</dbReference>
<dbReference type="InterPro" id="IPR018357">
    <property type="entry name" value="Hexapep_transf_CS"/>
</dbReference>
<dbReference type="InterPro" id="IPR007691">
    <property type="entry name" value="LpxD"/>
</dbReference>
<dbReference type="InterPro" id="IPR011004">
    <property type="entry name" value="Trimer_LpxA-like_sf"/>
</dbReference>
<dbReference type="InterPro" id="IPR020573">
    <property type="entry name" value="UDP_GlcNAc_AcTrfase_non-rep"/>
</dbReference>
<dbReference type="NCBIfam" id="TIGR01853">
    <property type="entry name" value="lipid_A_lpxD"/>
    <property type="match status" value="1"/>
</dbReference>
<dbReference type="NCBIfam" id="NF002060">
    <property type="entry name" value="PRK00892.1"/>
    <property type="match status" value="1"/>
</dbReference>
<dbReference type="PANTHER" id="PTHR43378">
    <property type="entry name" value="UDP-3-O-ACYLGLUCOSAMINE N-ACYLTRANSFERASE"/>
    <property type="match status" value="1"/>
</dbReference>
<dbReference type="PANTHER" id="PTHR43378:SF2">
    <property type="entry name" value="UDP-3-O-ACYLGLUCOSAMINE N-ACYLTRANSFERASE 1, MITOCHONDRIAL-RELATED"/>
    <property type="match status" value="1"/>
</dbReference>
<dbReference type="Pfam" id="PF00132">
    <property type="entry name" value="Hexapep"/>
    <property type="match status" value="2"/>
</dbReference>
<dbReference type="Pfam" id="PF14602">
    <property type="entry name" value="Hexapep_2"/>
    <property type="match status" value="1"/>
</dbReference>
<dbReference type="Pfam" id="PF04613">
    <property type="entry name" value="LpxD"/>
    <property type="match status" value="1"/>
</dbReference>
<dbReference type="SUPFAM" id="SSF51161">
    <property type="entry name" value="Trimeric LpxA-like enzymes"/>
    <property type="match status" value="1"/>
</dbReference>
<dbReference type="PROSITE" id="PS00101">
    <property type="entry name" value="HEXAPEP_TRANSFERASES"/>
    <property type="match status" value="4"/>
</dbReference>
<keyword id="KW-0012">Acyltransferase</keyword>
<keyword id="KW-0441">Lipid A biosynthesis</keyword>
<keyword id="KW-0444">Lipid biosynthesis</keyword>
<keyword id="KW-0443">Lipid metabolism</keyword>
<keyword id="KW-1185">Reference proteome</keyword>
<keyword id="KW-0677">Repeat</keyword>
<keyword id="KW-0808">Transferase</keyword>
<organism>
    <name type="scientific">Burkholderia multivorans (strain ATCC 17616 / 249)</name>
    <dbReference type="NCBI Taxonomy" id="395019"/>
    <lineage>
        <taxon>Bacteria</taxon>
        <taxon>Pseudomonadati</taxon>
        <taxon>Pseudomonadota</taxon>
        <taxon>Betaproteobacteria</taxon>
        <taxon>Burkholderiales</taxon>
        <taxon>Burkholderiaceae</taxon>
        <taxon>Burkholderia</taxon>
        <taxon>Burkholderia cepacia complex</taxon>
    </lineage>
</organism>